<proteinExistence type="inferred from homology"/>
<evidence type="ECO:0000255" key="1">
    <source>
        <dbReference type="HAMAP-Rule" id="MF_01666"/>
    </source>
</evidence>
<organism>
    <name type="scientific">Salmonella gallinarum (strain 287/91 / NCTC 13346)</name>
    <dbReference type="NCBI Taxonomy" id="550538"/>
    <lineage>
        <taxon>Bacteria</taxon>
        <taxon>Pseudomonadati</taxon>
        <taxon>Pseudomonadota</taxon>
        <taxon>Gammaproteobacteria</taxon>
        <taxon>Enterobacterales</taxon>
        <taxon>Enterobacteriaceae</taxon>
        <taxon>Salmonella</taxon>
    </lineage>
</organism>
<accession>B5RBG3</accession>
<name>GHRA_SALG2</name>
<reference key="1">
    <citation type="journal article" date="2008" name="Genome Res.">
        <title>Comparative genome analysis of Salmonella enteritidis PT4 and Salmonella gallinarum 287/91 provides insights into evolutionary and host adaptation pathways.</title>
        <authorList>
            <person name="Thomson N.R."/>
            <person name="Clayton D.J."/>
            <person name="Windhorst D."/>
            <person name="Vernikos G."/>
            <person name="Davidson S."/>
            <person name="Churcher C."/>
            <person name="Quail M.A."/>
            <person name="Stevens M."/>
            <person name="Jones M.A."/>
            <person name="Watson M."/>
            <person name="Barron A."/>
            <person name="Layton A."/>
            <person name="Pickard D."/>
            <person name="Kingsley R.A."/>
            <person name="Bignell A."/>
            <person name="Clark L."/>
            <person name="Harris B."/>
            <person name="Ormond D."/>
            <person name="Abdellah Z."/>
            <person name="Brooks K."/>
            <person name="Cherevach I."/>
            <person name="Chillingworth T."/>
            <person name="Woodward J."/>
            <person name="Norberczak H."/>
            <person name="Lord A."/>
            <person name="Arrowsmith C."/>
            <person name="Jagels K."/>
            <person name="Moule S."/>
            <person name="Mungall K."/>
            <person name="Saunders M."/>
            <person name="Whitehead S."/>
            <person name="Chabalgoity J.A."/>
            <person name="Maskell D."/>
            <person name="Humphreys T."/>
            <person name="Roberts M."/>
            <person name="Barrow P.A."/>
            <person name="Dougan G."/>
            <person name="Parkhill J."/>
        </authorList>
    </citation>
    <scope>NUCLEOTIDE SEQUENCE [LARGE SCALE GENOMIC DNA]</scope>
    <source>
        <strain>287/91 / NCTC 13346</strain>
    </source>
</reference>
<gene>
    <name evidence="1" type="primary">ghrA</name>
    <name type="ordered locus">SG1987</name>
</gene>
<dbReference type="EC" id="1.1.1.79" evidence="1"/>
<dbReference type="EC" id="1.1.1.81" evidence="1"/>
<dbReference type="EMBL" id="AM933173">
    <property type="protein sequence ID" value="CAR37837.1"/>
    <property type="molecule type" value="Genomic_DNA"/>
</dbReference>
<dbReference type="RefSeq" id="WP_000402551.1">
    <property type="nucleotide sequence ID" value="NC_011274.1"/>
</dbReference>
<dbReference type="SMR" id="B5RBG3"/>
<dbReference type="KEGG" id="seg:SG1987"/>
<dbReference type="HOGENOM" id="CLU_019796_1_0_6"/>
<dbReference type="Proteomes" id="UP000008321">
    <property type="component" value="Chromosome"/>
</dbReference>
<dbReference type="GO" id="GO:0005737">
    <property type="term" value="C:cytoplasm"/>
    <property type="evidence" value="ECO:0007669"/>
    <property type="project" value="UniProtKB-SubCell"/>
</dbReference>
<dbReference type="GO" id="GO:0030267">
    <property type="term" value="F:glyoxylate reductase (NADPH) activity"/>
    <property type="evidence" value="ECO:0007669"/>
    <property type="project" value="UniProtKB-UniRule"/>
</dbReference>
<dbReference type="GO" id="GO:0008465">
    <property type="term" value="F:hydroxypyruvate reductase (NADH) activity"/>
    <property type="evidence" value="ECO:0007669"/>
    <property type="project" value="RHEA"/>
</dbReference>
<dbReference type="GO" id="GO:0120509">
    <property type="term" value="F:hydroxypyruvate reductase (NADPH) activity"/>
    <property type="evidence" value="ECO:0007669"/>
    <property type="project" value="RHEA"/>
</dbReference>
<dbReference type="GO" id="GO:0051287">
    <property type="term" value="F:NAD binding"/>
    <property type="evidence" value="ECO:0007669"/>
    <property type="project" value="InterPro"/>
</dbReference>
<dbReference type="CDD" id="cd12164">
    <property type="entry name" value="GDH_like_2"/>
    <property type="match status" value="1"/>
</dbReference>
<dbReference type="FunFam" id="3.40.50.720:FF:000110">
    <property type="entry name" value="Glyoxylate/hydroxypyruvate reductase A"/>
    <property type="match status" value="1"/>
</dbReference>
<dbReference type="Gene3D" id="3.40.50.720">
    <property type="entry name" value="NAD(P)-binding Rossmann-like Domain"/>
    <property type="match status" value="2"/>
</dbReference>
<dbReference type="HAMAP" id="MF_01666">
    <property type="entry name" value="2_Hacid_dh_C_GhrA"/>
    <property type="match status" value="1"/>
</dbReference>
<dbReference type="InterPro" id="IPR006140">
    <property type="entry name" value="D-isomer_DH_NAD-bd"/>
</dbReference>
<dbReference type="InterPro" id="IPR023514">
    <property type="entry name" value="GhrA_Enterobacterales"/>
</dbReference>
<dbReference type="InterPro" id="IPR036291">
    <property type="entry name" value="NAD(P)-bd_dom_sf"/>
</dbReference>
<dbReference type="NCBIfam" id="NF012013">
    <property type="entry name" value="PRK15469.1"/>
    <property type="match status" value="1"/>
</dbReference>
<dbReference type="PANTHER" id="PTHR43333">
    <property type="entry name" value="2-HACID_DH_C DOMAIN-CONTAINING PROTEIN"/>
    <property type="match status" value="1"/>
</dbReference>
<dbReference type="PANTHER" id="PTHR43333:SF1">
    <property type="entry name" value="D-ISOMER SPECIFIC 2-HYDROXYACID DEHYDROGENASE NAD-BINDING DOMAIN-CONTAINING PROTEIN"/>
    <property type="match status" value="1"/>
</dbReference>
<dbReference type="Pfam" id="PF02826">
    <property type="entry name" value="2-Hacid_dh_C"/>
    <property type="match status" value="1"/>
</dbReference>
<dbReference type="SUPFAM" id="SSF51735">
    <property type="entry name" value="NAD(P)-binding Rossmann-fold domains"/>
    <property type="match status" value="1"/>
</dbReference>
<keyword id="KW-0963">Cytoplasm</keyword>
<keyword id="KW-0520">NAD</keyword>
<keyword id="KW-0521">NADP</keyword>
<keyword id="KW-0560">Oxidoreductase</keyword>
<feature type="chain" id="PRO_1000187276" description="Glyoxylate/hydroxypyruvate reductase A">
    <location>
        <begin position="1"/>
        <end position="312"/>
    </location>
</feature>
<feature type="active site" evidence="1">
    <location>
        <position position="227"/>
    </location>
</feature>
<feature type="active site" description="Proton donor" evidence="1">
    <location>
        <position position="275"/>
    </location>
</feature>
<sequence length="312" mass="34987">MEIIFYHPTFNAAWWVNALEKALPHARVREWKVGDNNPADYALVWQPPVEMLAGRRLKAVFALGAGVDAILSKLNAHPEMLDASIPLFRLEDTGMGLQMQEYAVSQVLHWFRRFDDYQALKNQALWKPLPEYTREEFSVGIMGAGVLGAKVAESLQAWGFPLRCWSRSRKSWPGVESYVGREELHAFLNQTRVLINLLPNTAQTVGIINSELLDQLPDGAYVLNLARGVHVQEADLLAALDSGKLKGAMLDVFSQEPLPQESPLWRHPRVAMTPHIAAVTRPAEAIDYISRTITQLEKGEPVTGQVDRARGY</sequence>
<protein>
    <recommendedName>
        <fullName evidence="1">Glyoxylate/hydroxypyruvate reductase A</fullName>
        <ecNumber evidence="1">1.1.1.79</ecNumber>
        <ecNumber evidence="1">1.1.1.81</ecNumber>
    </recommendedName>
    <alternativeName>
        <fullName evidence="1">2-ketoacid reductase</fullName>
    </alternativeName>
</protein>
<comment type="function">
    <text evidence="1">Catalyzes the NADPH-dependent reduction of glyoxylate and hydroxypyruvate into glycolate and glycerate, respectively.</text>
</comment>
<comment type="catalytic activity">
    <reaction evidence="1">
        <text>glycolate + NADP(+) = glyoxylate + NADPH + H(+)</text>
        <dbReference type="Rhea" id="RHEA:10992"/>
        <dbReference type="ChEBI" id="CHEBI:15378"/>
        <dbReference type="ChEBI" id="CHEBI:29805"/>
        <dbReference type="ChEBI" id="CHEBI:36655"/>
        <dbReference type="ChEBI" id="CHEBI:57783"/>
        <dbReference type="ChEBI" id="CHEBI:58349"/>
        <dbReference type="EC" id="1.1.1.79"/>
    </reaction>
</comment>
<comment type="catalytic activity">
    <reaction evidence="1">
        <text>(R)-glycerate + NAD(+) = 3-hydroxypyruvate + NADH + H(+)</text>
        <dbReference type="Rhea" id="RHEA:17905"/>
        <dbReference type="ChEBI" id="CHEBI:15378"/>
        <dbReference type="ChEBI" id="CHEBI:16659"/>
        <dbReference type="ChEBI" id="CHEBI:17180"/>
        <dbReference type="ChEBI" id="CHEBI:57540"/>
        <dbReference type="ChEBI" id="CHEBI:57945"/>
        <dbReference type="EC" id="1.1.1.81"/>
    </reaction>
</comment>
<comment type="catalytic activity">
    <reaction evidence="1">
        <text>(R)-glycerate + NADP(+) = 3-hydroxypyruvate + NADPH + H(+)</text>
        <dbReference type="Rhea" id="RHEA:18657"/>
        <dbReference type="ChEBI" id="CHEBI:15378"/>
        <dbReference type="ChEBI" id="CHEBI:16659"/>
        <dbReference type="ChEBI" id="CHEBI:17180"/>
        <dbReference type="ChEBI" id="CHEBI:57783"/>
        <dbReference type="ChEBI" id="CHEBI:58349"/>
        <dbReference type="EC" id="1.1.1.81"/>
    </reaction>
</comment>
<comment type="subcellular location">
    <subcellularLocation>
        <location evidence="1">Cytoplasm</location>
    </subcellularLocation>
</comment>
<comment type="similarity">
    <text evidence="1">Belongs to the D-isomer specific 2-hydroxyacid dehydrogenase family. GhrA subfamily.</text>
</comment>